<sequence>MEINKLQVEAIKSGSVIDHIPEYIGFKLLSLFRFTETEKRITIGLNLPSKKLGRKDIIKIENTFLSDEQINQLAIYAPHATVNYINEYNLVRKVFPTLPETIDRILICPNSNCVTNHHLINSSFILKEDQFFNMNLKCKYCEKEFYKKIVLSCQ</sequence>
<comment type="function">
    <text evidence="1">Involved in allosteric regulation of aspartate carbamoyltransferase.</text>
</comment>
<comment type="cofactor">
    <cofactor evidence="1">
        <name>Zn(2+)</name>
        <dbReference type="ChEBI" id="CHEBI:29105"/>
    </cofactor>
    <text evidence="1">Binds 1 zinc ion per subunit.</text>
</comment>
<comment type="subunit">
    <text evidence="1">Contains catalytic and regulatory chains.</text>
</comment>
<comment type="similarity">
    <text evidence="2">Belongs to the PyrI family.</text>
</comment>
<proteinExistence type="inferred from homology"/>
<protein>
    <recommendedName>
        <fullName>Aspartate carbamoyltransferase regulatory chain</fullName>
    </recommendedName>
</protein>
<accession>P57451</accession>
<keyword id="KW-0479">Metal-binding</keyword>
<keyword id="KW-0665">Pyrimidine biosynthesis</keyword>
<keyword id="KW-1185">Reference proteome</keyword>
<keyword id="KW-0862">Zinc</keyword>
<name>PYRI_BUCAI</name>
<organism>
    <name type="scientific">Buchnera aphidicola subsp. Acyrthosiphon pisum (strain APS)</name>
    <name type="common">Acyrthosiphon pisum symbiotic bacterium</name>
    <dbReference type="NCBI Taxonomy" id="107806"/>
    <lineage>
        <taxon>Bacteria</taxon>
        <taxon>Pseudomonadati</taxon>
        <taxon>Pseudomonadota</taxon>
        <taxon>Gammaproteobacteria</taxon>
        <taxon>Enterobacterales</taxon>
        <taxon>Erwiniaceae</taxon>
        <taxon>Buchnera</taxon>
    </lineage>
</organism>
<gene>
    <name type="primary">pyrI</name>
    <name type="ordered locus">BU370</name>
</gene>
<dbReference type="EMBL" id="BA000003">
    <property type="protein sequence ID" value="BAB13074.1"/>
    <property type="molecule type" value="Genomic_DNA"/>
</dbReference>
<dbReference type="RefSeq" id="NP_240188.1">
    <property type="nucleotide sequence ID" value="NC_002528.1"/>
</dbReference>
<dbReference type="RefSeq" id="WP_009874328.1">
    <property type="nucleotide sequence ID" value="NC_002528.1"/>
</dbReference>
<dbReference type="SMR" id="P57451"/>
<dbReference type="STRING" id="563178.BUAP5A_363"/>
<dbReference type="EnsemblBacteria" id="BAB13074">
    <property type="protein sequence ID" value="BAB13074"/>
    <property type="gene ID" value="BAB13074"/>
</dbReference>
<dbReference type="KEGG" id="buc:BU370"/>
<dbReference type="PATRIC" id="fig|107806.10.peg.384"/>
<dbReference type="eggNOG" id="COG1781">
    <property type="taxonomic scope" value="Bacteria"/>
</dbReference>
<dbReference type="HOGENOM" id="CLU_128576_0_0_6"/>
<dbReference type="Proteomes" id="UP000001806">
    <property type="component" value="Chromosome"/>
</dbReference>
<dbReference type="GO" id="GO:0009347">
    <property type="term" value="C:aspartate carbamoyltransferase complex"/>
    <property type="evidence" value="ECO:0007669"/>
    <property type="project" value="InterPro"/>
</dbReference>
<dbReference type="GO" id="GO:0046872">
    <property type="term" value="F:metal ion binding"/>
    <property type="evidence" value="ECO:0007669"/>
    <property type="project" value="UniProtKB-KW"/>
</dbReference>
<dbReference type="GO" id="GO:0006207">
    <property type="term" value="P:'de novo' pyrimidine nucleobase biosynthetic process"/>
    <property type="evidence" value="ECO:0007669"/>
    <property type="project" value="InterPro"/>
</dbReference>
<dbReference type="GO" id="GO:0006221">
    <property type="term" value="P:pyrimidine nucleotide biosynthetic process"/>
    <property type="evidence" value="ECO:0007669"/>
    <property type="project" value="UniProtKB-UniRule"/>
</dbReference>
<dbReference type="Gene3D" id="2.30.30.20">
    <property type="entry name" value="Aspartate carbamoyltransferase regulatory subunit, C-terminal domain"/>
    <property type="match status" value="1"/>
</dbReference>
<dbReference type="Gene3D" id="3.30.70.140">
    <property type="entry name" value="Aspartate carbamoyltransferase regulatory subunit, N-terminal domain"/>
    <property type="match status" value="1"/>
</dbReference>
<dbReference type="HAMAP" id="MF_00002">
    <property type="entry name" value="Asp_carb_tr_reg"/>
    <property type="match status" value="1"/>
</dbReference>
<dbReference type="InterPro" id="IPR020545">
    <property type="entry name" value="Asp_carbamoyltransf_reg_N"/>
</dbReference>
<dbReference type="InterPro" id="IPR002801">
    <property type="entry name" value="Asp_carbamoylTrfase_reg"/>
</dbReference>
<dbReference type="InterPro" id="IPR020542">
    <property type="entry name" value="Asp_carbamoyltrfase_reg_C"/>
</dbReference>
<dbReference type="InterPro" id="IPR036792">
    <property type="entry name" value="Asp_carbatrfase_reg_C_sf"/>
</dbReference>
<dbReference type="InterPro" id="IPR036793">
    <property type="entry name" value="Asp_carbatrfase_reg_N_sf"/>
</dbReference>
<dbReference type="NCBIfam" id="TIGR00240">
    <property type="entry name" value="ATCase_reg"/>
    <property type="match status" value="1"/>
</dbReference>
<dbReference type="PANTHER" id="PTHR35805">
    <property type="entry name" value="ASPARTATE CARBAMOYLTRANSFERASE REGULATORY CHAIN"/>
    <property type="match status" value="1"/>
</dbReference>
<dbReference type="PANTHER" id="PTHR35805:SF1">
    <property type="entry name" value="ASPARTATE CARBAMOYLTRANSFERASE REGULATORY CHAIN"/>
    <property type="match status" value="1"/>
</dbReference>
<dbReference type="Pfam" id="PF01948">
    <property type="entry name" value="PyrI"/>
    <property type="match status" value="1"/>
</dbReference>
<dbReference type="Pfam" id="PF02748">
    <property type="entry name" value="PyrI_C"/>
    <property type="match status" value="1"/>
</dbReference>
<dbReference type="SUPFAM" id="SSF57825">
    <property type="entry name" value="Aspartate carbamoyltransferase, Regulatory-chain, C-terminal domain"/>
    <property type="match status" value="1"/>
</dbReference>
<dbReference type="SUPFAM" id="SSF54893">
    <property type="entry name" value="Aspartate carbamoyltransferase, Regulatory-chain, N-terminal domain"/>
    <property type="match status" value="1"/>
</dbReference>
<evidence type="ECO:0000250" key="1"/>
<evidence type="ECO:0000305" key="2"/>
<feature type="chain" id="PRO_0000142298" description="Aspartate carbamoyltransferase regulatory chain">
    <location>
        <begin position="1"/>
        <end position="154"/>
    </location>
</feature>
<feature type="binding site" evidence="1">
    <location>
        <position position="108"/>
    </location>
    <ligand>
        <name>Zn(2+)</name>
        <dbReference type="ChEBI" id="CHEBI:29105"/>
    </ligand>
</feature>
<feature type="binding site" evidence="1">
    <location>
        <position position="113"/>
    </location>
    <ligand>
        <name>Zn(2+)</name>
        <dbReference type="ChEBI" id="CHEBI:29105"/>
    </ligand>
</feature>
<feature type="binding site" evidence="1">
    <location>
        <position position="138"/>
    </location>
    <ligand>
        <name>Zn(2+)</name>
        <dbReference type="ChEBI" id="CHEBI:29105"/>
    </ligand>
</feature>
<feature type="binding site" evidence="1">
    <location>
        <position position="141"/>
    </location>
    <ligand>
        <name>Zn(2+)</name>
        <dbReference type="ChEBI" id="CHEBI:29105"/>
    </ligand>
</feature>
<reference key="1">
    <citation type="journal article" date="2000" name="Nature">
        <title>Genome sequence of the endocellular bacterial symbiont of aphids Buchnera sp. APS.</title>
        <authorList>
            <person name="Shigenobu S."/>
            <person name="Watanabe H."/>
            <person name="Hattori M."/>
            <person name="Sakaki Y."/>
            <person name="Ishikawa H."/>
        </authorList>
    </citation>
    <scope>NUCLEOTIDE SEQUENCE [LARGE SCALE GENOMIC DNA]</scope>
    <source>
        <strain>APS</strain>
    </source>
</reference>